<evidence type="ECO:0000250" key="1">
    <source>
        <dbReference type="UniProtKB" id="Q80ZU9"/>
    </source>
</evidence>
<evidence type="ECO:0000250" key="2">
    <source>
        <dbReference type="UniProtKB" id="Q96N19"/>
    </source>
</evidence>
<evidence type="ECO:0000255" key="3"/>
<evidence type="ECO:0000305" key="4"/>
<gene>
    <name type="primary">GPR137</name>
</gene>
<sequence length="395" mass="43596">MESNLSGLVPAAGLVPALPPAVTLGLTAAYTTLYALLFFSVYAQLWLVLLYGHKRLSYQTVFLALCLLWAALRTTLFSFYFRDTPRANHLGPLPFWLLYCCPVCLQFFTLTLMNLYFAQVVFKAKAKRRPEMSRGLLAVRGAFVGASLLFLLVNVLCAMLSRRRRAQPWALLLVRVLVSDSLFVICALSLAACLCLVARRAPSTSIYLEAKGTSVCQAAAMGGAMVLLYASRACYNLAALALAPRSRLDAFDYDWYNVSDQADLVNDLGNKGYLVFGLILFVWELLPTTLLVGFFRVHRPPQDLSTSRILNGQVFGSRSYFFDRAHCEDEGCSWEHSRGESTSMSGSLGSSSWYGTIGREPGWCGGSQTRTTPLLFSQVLGPGGHHHSLYSTPQT</sequence>
<keyword id="KW-0072">Autophagy</keyword>
<keyword id="KW-0325">Glycoprotein</keyword>
<keyword id="KW-0458">Lysosome</keyword>
<keyword id="KW-0472">Membrane</keyword>
<keyword id="KW-1185">Reference proteome</keyword>
<keyword id="KW-0812">Transmembrane</keyword>
<keyword id="KW-1133">Transmembrane helix</keyword>
<name>G137A_BOVIN</name>
<comment type="function">
    <text evidence="2">Lysosomal integral membrane protein that may regulate MTORC1 complex translocation to lysosomes. May play a role in autophagy.</text>
</comment>
<comment type="function">
    <text evidence="1">May activate Wnt/beta-catenin signaling to modulate epithelial cell function.</text>
</comment>
<comment type="subcellular location">
    <subcellularLocation>
        <location evidence="2">Lysosome membrane</location>
        <topology evidence="3">Multi-pass membrane protein</topology>
    </subcellularLocation>
</comment>
<comment type="similarity">
    <text evidence="4">Belongs to the GPR137 family.</text>
</comment>
<reference key="1">
    <citation type="submission" date="2007-03" db="EMBL/GenBank/DDBJ databases">
        <authorList>
            <consortium name="NIH - Mammalian Gene Collection (MGC) project"/>
        </authorList>
    </citation>
    <scope>NUCLEOTIDE SEQUENCE [LARGE SCALE MRNA]</scope>
    <source>
        <strain>Hereford</strain>
        <tissue>Thalamus</tissue>
    </source>
</reference>
<feature type="chain" id="PRO_0000269995" description="Integral membrane protein GPR137">
    <location>
        <begin position="1"/>
        <end position="395"/>
    </location>
</feature>
<feature type="topological domain" description="Lumenal" evidence="4">
    <location>
        <begin position="1"/>
        <end position="31"/>
    </location>
</feature>
<feature type="transmembrane region" description="Helical; Name=1" evidence="3">
    <location>
        <begin position="32"/>
        <end position="52"/>
    </location>
</feature>
<feature type="topological domain" description="Cytoplasmic" evidence="4">
    <location>
        <begin position="53"/>
        <end position="60"/>
    </location>
</feature>
<feature type="transmembrane region" description="Helical; Name=2" evidence="3">
    <location>
        <begin position="61"/>
        <end position="81"/>
    </location>
</feature>
<feature type="topological domain" description="Lumenal" evidence="4">
    <location>
        <begin position="82"/>
        <end position="89"/>
    </location>
</feature>
<feature type="transmembrane region" description="Helical; Name=3" evidence="3">
    <location>
        <begin position="90"/>
        <end position="110"/>
    </location>
</feature>
<feature type="topological domain" description="Cytoplasmic" evidence="4">
    <location>
        <begin position="111"/>
        <end position="140"/>
    </location>
</feature>
<feature type="transmembrane region" description="Helical; Name=4" evidence="3">
    <location>
        <begin position="141"/>
        <end position="161"/>
    </location>
</feature>
<feature type="topological domain" description="Lumenal" evidence="4">
    <location>
        <begin position="162"/>
        <end position="175"/>
    </location>
</feature>
<feature type="transmembrane region" description="Helical; Name=5" evidence="3">
    <location>
        <begin position="176"/>
        <end position="196"/>
    </location>
</feature>
<feature type="topological domain" description="Cytoplasmic" evidence="4">
    <location>
        <begin position="197"/>
        <end position="222"/>
    </location>
</feature>
<feature type="transmembrane region" description="Helical; Name=6" evidence="3">
    <location>
        <begin position="223"/>
        <end position="243"/>
    </location>
</feature>
<feature type="topological domain" description="Lumenal" evidence="4">
    <location>
        <begin position="244"/>
        <end position="274"/>
    </location>
</feature>
<feature type="transmembrane region" description="Helical; Name=7" evidence="3">
    <location>
        <begin position="275"/>
        <end position="295"/>
    </location>
</feature>
<feature type="topological domain" description="Cytoplasmic" evidence="4">
    <location>
        <begin position="296"/>
        <end position="395"/>
    </location>
</feature>
<feature type="glycosylation site" description="N-linked (GlcNAc...) asparagine" evidence="3">
    <location>
        <position position="4"/>
    </location>
</feature>
<feature type="glycosylation site" description="N-linked (GlcNAc...) asparagine" evidence="3">
    <location>
        <position position="257"/>
    </location>
</feature>
<organism>
    <name type="scientific">Bos taurus</name>
    <name type="common">Bovine</name>
    <dbReference type="NCBI Taxonomy" id="9913"/>
    <lineage>
        <taxon>Eukaryota</taxon>
        <taxon>Metazoa</taxon>
        <taxon>Chordata</taxon>
        <taxon>Craniata</taxon>
        <taxon>Vertebrata</taxon>
        <taxon>Euteleostomi</taxon>
        <taxon>Mammalia</taxon>
        <taxon>Eutheria</taxon>
        <taxon>Laurasiatheria</taxon>
        <taxon>Artiodactyla</taxon>
        <taxon>Ruminantia</taxon>
        <taxon>Pecora</taxon>
        <taxon>Bovidae</taxon>
        <taxon>Bovinae</taxon>
        <taxon>Bos</taxon>
    </lineage>
</organism>
<protein>
    <recommendedName>
        <fullName>Integral membrane protein GPR137</fullName>
    </recommendedName>
</protein>
<accession>Q17QQ5</accession>
<dbReference type="EMBL" id="BC118235">
    <property type="protein sequence ID" value="AAI18236.2"/>
    <property type="molecule type" value="mRNA"/>
</dbReference>
<dbReference type="RefSeq" id="NP_001106766.1">
    <property type="nucleotide sequence ID" value="NM_001113295.1"/>
</dbReference>
<dbReference type="RefSeq" id="XP_010819359.1">
    <property type="nucleotide sequence ID" value="XM_010821057.4"/>
</dbReference>
<dbReference type="FunCoup" id="Q17QQ5">
    <property type="interactions" value="1263"/>
</dbReference>
<dbReference type="STRING" id="9913.ENSBTAP00000064905"/>
<dbReference type="GlyCosmos" id="Q17QQ5">
    <property type="glycosylation" value="2 sites, No reported glycans"/>
</dbReference>
<dbReference type="GlyGen" id="Q17QQ5">
    <property type="glycosylation" value="2 sites"/>
</dbReference>
<dbReference type="PaxDb" id="9913-ENSBTAP00000030100"/>
<dbReference type="Ensembl" id="ENSBTAT00000030114.3">
    <property type="protein sequence ID" value="ENSBTAP00000030100.2"/>
    <property type="gene ID" value="ENSBTAG00000012512.6"/>
</dbReference>
<dbReference type="GeneID" id="505015"/>
<dbReference type="KEGG" id="bta:505015"/>
<dbReference type="CTD" id="56834"/>
<dbReference type="VEuPathDB" id="HostDB:ENSBTAG00000012512"/>
<dbReference type="VGNC" id="VGNC:29550">
    <property type="gene designation" value="GPR137"/>
</dbReference>
<dbReference type="eggNOG" id="ENOG502QQ83">
    <property type="taxonomic scope" value="Eukaryota"/>
</dbReference>
<dbReference type="GeneTree" id="ENSGT00940000153986"/>
<dbReference type="HOGENOM" id="CLU_050057_0_0_1"/>
<dbReference type="InParanoid" id="Q17QQ5"/>
<dbReference type="OrthoDB" id="192544at2759"/>
<dbReference type="TreeFam" id="TF329003"/>
<dbReference type="Proteomes" id="UP000009136">
    <property type="component" value="Chromosome 29"/>
</dbReference>
<dbReference type="Bgee" id="ENSBTAG00000012512">
    <property type="expression patterns" value="Expressed in temporal cortex and 107 other cell types or tissues"/>
</dbReference>
<dbReference type="GO" id="GO:0005765">
    <property type="term" value="C:lysosomal membrane"/>
    <property type="evidence" value="ECO:0000250"/>
    <property type="project" value="UniProtKB"/>
</dbReference>
<dbReference type="GO" id="GO:0006914">
    <property type="term" value="P:autophagy"/>
    <property type="evidence" value="ECO:0007669"/>
    <property type="project" value="UniProtKB-KW"/>
</dbReference>
<dbReference type="GO" id="GO:0045779">
    <property type="term" value="P:negative regulation of bone resorption"/>
    <property type="evidence" value="ECO:0000318"/>
    <property type="project" value="GO_Central"/>
</dbReference>
<dbReference type="GO" id="GO:0045671">
    <property type="term" value="P:negative regulation of osteoclast differentiation"/>
    <property type="evidence" value="ECO:0000318"/>
    <property type="project" value="GO_Central"/>
</dbReference>
<dbReference type="GO" id="GO:1904263">
    <property type="term" value="P:positive regulation of TORC1 signaling"/>
    <property type="evidence" value="ECO:0000318"/>
    <property type="project" value="GO_Central"/>
</dbReference>
<dbReference type="GO" id="GO:0010506">
    <property type="term" value="P:regulation of autophagy"/>
    <property type="evidence" value="ECO:0000318"/>
    <property type="project" value="GO_Central"/>
</dbReference>
<dbReference type="GO" id="GO:0046850">
    <property type="term" value="P:regulation of bone remodeling"/>
    <property type="evidence" value="ECO:0000315"/>
    <property type="project" value="UniProtKB"/>
</dbReference>
<dbReference type="GO" id="GO:0045124">
    <property type="term" value="P:regulation of bone resorption"/>
    <property type="evidence" value="ECO:0000315"/>
    <property type="project" value="UniProtKB"/>
</dbReference>
<dbReference type="GO" id="GO:0030278">
    <property type="term" value="P:regulation of ossification"/>
    <property type="evidence" value="ECO:0000315"/>
    <property type="project" value="UniProtKB"/>
</dbReference>
<dbReference type="CDD" id="cd21474">
    <property type="entry name" value="7tm_GPR137A"/>
    <property type="match status" value="1"/>
</dbReference>
<dbReference type="InterPro" id="IPR029723">
    <property type="entry name" value="GPR137"/>
</dbReference>
<dbReference type="PANTHER" id="PTHR15146">
    <property type="entry name" value="INTEGRAL MEMBRANE PROTEIN GPR137"/>
    <property type="match status" value="1"/>
</dbReference>
<dbReference type="PANTHER" id="PTHR15146:SF5">
    <property type="entry name" value="INTEGRAL MEMBRANE PROTEIN GPR137"/>
    <property type="match status" value="1"/>
</dbReference>
<proteinExistence type="evidence at transcript level"/>